<name>DPOL_BPSPB</name>
<sequence length="1305" mass="150538">MIGCHCHTDRSNIRLLDSTNSVKELLKTAVKMEYKGLAITDHEVLSAHLDAIRTVREMKKKGDMPEDFKLILGNEAYLVDSLEEVRDNYKSGVTKFPHFLMLAMDPKGHEQLRILSSQAWENSFYTGTMERVPTVKKDVEELLSKDPGHIIATTACLGSEVNIHLLKIKAFEETGDSQSIKQHKLKIHEFITWCIEVFGKDKFFIELQPALSEEQIYCNKKLIDIANGYDLQMIVTTDAHYLRPEDRAIHQAFLNAKDGEREVDSFYEACFVQNVDEIHERMDYIDKEVIDQAIKNTMLIGEMIEDYTIEHEPIIPKMELPNFKLRHLFKPAYDQYEYIKKMSESADEQDRYLLKLIEDGFEEKLKTSELTREAFHKILNRINVELGELWEISQKLNQSMSSYYITVREIINIIWDDECGGDSLVGAARGSAAGYLVNYLLDNTQINPMQYDLPHWRHIHKSRPDLPDIDIDTEGSKRQKILKALRERFGDKRVLQIATFGTEGSKSALQTACRGLGIDNDISQYLSGMIPFERGSNWPLKHCFYGDKETGRKPIKEFIREVEQYPNLKETALKIEGLTNKRSSHAAGVIIFNDEYTKSNAMMKTPKGAYITQFNMGDSEAMGSVKFDLLTIEALDKIRVTLDQLIENNEIEWQGSLKETYNKYIHPDVIEYEDDKLWEMAGNGEIMDLFQFSTEVGHQSVVKVKPKNLLEAAVTNSLMRLMSDGEEQPVDTYVKYKNNLNKWYEEMTRYGLSEKEIRVMERHLKDIYGVADTQEVVMQMVMDKDIANFDIKESNYLRKSIAKKKEDVLKEVEELFFKKGKEIGTSDNLLNYVWNVQFKRQFGYSFSLLHTLAYSIIALQELNLNYRYNPLYWNTACLTVNSGGIDTEDTKDNKKTAATNYGKVASAIGNIRQRGIKIDLPDINKADFGFRTDINNNSILFGLKGMNGIGDDVIHHIVLNRPYSDFNDFIERMFKSGIIKKGQVIQLIKGGCFDSFGNRQEIMKAFISLISEPKSKLTLSNLKMLIENNIVPSEFAQEVRFFRFKDYISKKVYKTLKSPKDKLFLLDDVSASFYNQHFSEDSVVDMLNGQLVISEKAFKKEYDNKMSNIKSWITTEEPLKKLNDCLLIKEWEKYADGSLGKWEMDSLSYYYNDHELSGVNFAKYDIADFYKLPAEPVKGKPYQWRGKTLYEYETTRIIGTVLDRDKNKHAITLLTPTGVVTVKQWSGSFSHYNKQISRSIGGGKKEVIEKSWYTRGTLLMFTGFRRGNNFIPKVYKDSIYNHTVCRIDFVDNEGSMSLTTKRAEI</sequence>
<proteinExistence type="inferred from homology"/>
<organismHost>
    <name type="scientific">Bacillus pumilus</name>
    <name type="common">Bacillus mesentericus</name>
    <dbReference type="NCBI Taxonomy" id="1408"/>
</organismHost>
<organismHost>
    <name type="scientific">Bacillus subtilis</name>
    <dbReference type="NCBI Taxonomy" id="1423"/>
</organismHost>
<comment type="function">
    <text evidence="1">Replicates viral genomic DNA.</text>
</comment>
<comment type="catalytic activity">
    <reaction evidence="1">
        <text>DNA(n) + a 2'-deoxyribonucleoside 5'-triphosphate = DNA(n+1) + diphosphate</text>
        <dbReference type="Rhea" id="RHEA:22508"/>
        <dbReference type="Rhea" id="RHEA-COMP:17339"/>
        <dbReference type="Rhea" id="RHEA-COMP:17340"/>
        <dbReference type="ChEBI" id="CHEBI:33019"/>
        <dbReference type="ChEBI" id="CHEBI:61560"/>
        <dbReference type="ChEBI" id="CHEBI:173112"/>
        <dbReference type="EC" id="2.7.7.7"/>
    </reaction>
</comment>
<comment type="similarity">
    <text evidence="1">Belongs to the DNA polymerase type-C family.</text>
</comment>
<keyword id="KW-0235">DNA replication</keyword>
<keyword id="KW-0238">DNA-binding</keyword>
<keyword id="KW-0239">DNA-directed DNA polymerase</keyword>
<keyword id="KW-0548">Nucleotidyltransferase</keyword>
<keyword id="KW-1185">Reference proteome</keyword>
<keyword id="KW-0808">Transferase</keyword>
<keyword id="KW-1194">Viral DNA replication</keyword>
<accession>O64146</accession>
<dbReference type="EC" id="2.7.7.7" evidence="1"/>
<dbReference type="EMBL" id="AF020713">
    <property type="protein sequence ID" value="AAC13106.1"/>
    <property type="molecule type" value="Genomic_DNA"/>
</dbReference>
<dbReference type="PIR" id="T12897">
    <property type="entry name" value="T12897"/>
</dbReference>
<dbReference type="RefSeq" id="NP_046685.1">
    <property type="nucleotide sequence ID" value="NC_001884.1"/>
</dbReference>
<dbReference type="SMR" id="O64146"/>
<dbReference type="GeneID" id="1261476"/>
<dbReference type="KEGG" id="vg:1261476"/>
<dbReference type="Proteomes" id="UP000009091">
    <property type="component" value="Genome"/>
</dbReference>
<dbReference type="GO" id="GO:0008408">
    <property type="term" value="F:3'-5' exonuclease activity"/>
    <property type="evidence" value="ECO:0007669"/>
    <property type="project" value="InterPro"/>
</dbReference>
<dbReference type="GO" id="GO:0003677">
    <property type="term" value="F:DNA binding"/>
    <property type="evidence" value="ECO:0007669"/>
    <property type="project" value="UniProtKB-KW"/>
</dbReference>
<dbReference type="GO" id="GO:0003887">
    <property type="term" value="F:DNA-directed DNA polymerase activity"/>
    <property type="evidence" value="ECO:0007669"/>
    <property type="project" value="UniProtKB-KW"/>
</dbReference>
<dbReference type="GO" id="GO:0006260">
    <property type="term" value="P:DNA replication"/>
    <property type="evidence" value="ECO:0007669"/>
    <property type="project" value="UniProtKB-KW"/>
</dbReference>
<dbReference type="GO" id="GO:0039693">
    <property type="term" value="P:viral DNA genome replication"/>
    <property type="evidence" value="ECO:0007669"/>
    <property type="project" value="UniProtKB-KW"/>
</dbReference>
<dbReference type="Gene3D" id="1.10.150.870">
    <property type="match status" value="1"/>
</dbReference>
<dbReference type="Gene3D" id="1.10.10.1600">
    <property type="entry name" value="Bacterial DNA polymerase III alpha subunit, thumb domain"/>
    <property type="match status" value="1"/>
</dbReference>
<dbReference type="Gene3D" id="3.20.20.140">
    <property type="entry name" value="Metal-dependent hydrolases"/>
    <property type="match status" value="1"/>
</dbReference>
<dbReference type="InterPro" id="IPR011708">
    <property type="entry name" value="DNA_pol3_alpha_NTPase_dom"/>
</dbReference>
<dbReference type="InterPro" id="IPR041931">
    <property type="entry name" value="DNA_pol3_alpha_thumb_dom"/>
</dbReference>
<dbReference type="InterPro" id="IPR040982">
    <property type="entry name" value="DNA_pol3_finger"/>
</dbReference>
<dbReference type="InterPro" id="IPR004805">
    <property type="entry name" value="DnaE2/DnaE/PolC"/>
</dbReference>
<dbReference type="InterPro" id="IPR029460">
    <property type="entry name" value="DNAPol_HHH"/>
</dbReference>
<dbReference type="InterPro" id="IPR004013">
    <property type="entry name" value="PHP_dom"/>
</dbReference>
<dbReference type="InterPro" id="IPR003141">
    <property type="entry name" value="Pol/His_phosphatase_N"/>
</dbReference>
<dbReference type="InterPro" id="IPR016195">
    <property type="entry name" value="Pol/histidinol_Pase-like"/>
</dbReference>
<dbReference type="NCBIfam" id="TIGR00594">
    <property type="entry name" value="polc"/>
    <property type="match status" value="1"/>
</dbReference>
<dbReference type="PANTHER" id="PTHR32294">
    <property type="entry name" value="DNA POLYMERASE III SUBUNIT ALPHA"/>
    <property type="match status" value="1"/>
</dbReference>
<dbReference type="PANTHER" id="PTHR32294:SF0">
    <property type="entry name" value="DNA POLYMERASE III SUBUNIT ALPHA"/>
    <property type="match status" value="1"/>
</dbReference>
<dbReference type="Pfam" id="PF07733">
    <property type="entry name" value="DNA_pol3_alpha"/>
    <property type="match status" value="1"/>
</dbReference>
<dbReference type="Pfam" id="PF17657">
    <property type="entry name" value="DNA_pol3_finger"/>
    <property type="match status" value="1"/>
</dbReference>
<dbReference type="Pfam" id="PF14579">
    <property type="entry name" value="HHH_6"/>
    <property type="match status" value="1"/>
</dbReference>
<dbReference type="Pfam" id="PF02811">
    <property type="entry name" value="PHP"/>
    <property type="match status" value="1"/>
</dbReference>
<dbReference type="SMART" id="SM00481">
    <property type="entry name" value="POLIIIAc"/>
    <property type="match status" value="1"/>
</dbReference>
<dbReference type="SUPFAM" id="SSF89550">
    <property type="entry name" value="PHP domain-like"/>
    <property type="match status" value="1"/>
</dbReference>
<reference key="1">
    <citation type="journal article" date="1998" name="Proc. Natl. Acad. Sci. U.S.A.">
        <title>Introns and intein coding sequence in the ribonucleotide reductase genes of Bacillus subtilis temperate bacteriophage SPbeta.</title>
        <authorList>
            <person name="Lazarevic V."/>
            <person name="Soldo B."/>
            <person name="Duesterhoeft A."/>
            <person name="Hilbert H."/>
            <person name="Maueel C."/>
            <person name="Karamata D."/>
        </authorList>
    </citation>
    <scope>NUCLEOTIDE SEQUENCE [GENOMIC DNA]</scope>
</reference>
<evidence type="ECO:0000305" key="1"/>
<evidence type="ECO:0000312" key="2">
    <source>
        <dbReference type="Proteomes" id="UP000009091"/>
    </source>
</evidence>
<protein>
    <recommendedName>
        <fullName>DNA-directed DNA polymerase</fullName>
        <ecNumber evidence="1">2.7.7.7</ecNumber>
    </recommendedName>
</protein>
<feature type="chain" id="PRO_0000431826" description="DNA-directed DNA polymerase">
    <location>
        <begin position="1"/>
        <end position="1305"/>
    </location>
</feature>
<organism evidence="2">
    <name type="scientific">Bacillus phage SPbeta</name>
    <name type="common">Bacillus phage SPBc2</name>
    <name type="synonym">Bacteriophage SP-beta</name>
    <dbReference type="NCBI Taxonomy" id="2932878"/>
    <lineage>
        <taxon>Viruses</taxon>
        <taxon>Duplodnaviria</taxon>
        <taxon>Heunggongvirae</taxon>
        <taxon>Uroviricota</taxon>
        <taxon>Caudoviricetes</taxon>
        <taxon>Spbetavirus</taxon>
        <taxon>Spbetavirus SPbeta</taxon>
    </lineage>
</organism>